<sequence length="130" mass="13654">MSTPRIALIAHDAKKDDIVALAGAYRATLAQCRLVATGTTGGRIAQAHGLDVERKLSGPLGGDLQIGAELADGRVDIVIFLRDPMTAQPHDPDITALVRACDVHDVPVATNVATARVLLDDLARRLTANA</sequence>
<evidence type="ECO:0000255" key="1">
    <source>
        <dbReference type="HAMAP-Rule" id="MF_00549"/>
    </source>
</evidence>
<keyword id="KW-0456">Lyase</keyword>
<name>MGSA_BURM9</name>
<proteinExistence type="inferred from homology"/>
<comment type="function">
    <text evidence="1">Catalyzes the formation of methylglyoxal from dihydroxyacetone phosphate.</text>
</comment>
<comment type="catalytic activity">
    <reaction evidence="1">
        <text>dihydroxyacetone phosphate = methylglyoxal + phosphate</text>
        <dbReference type="Rhea" id="RHEA:17937"/>
        <dbReference type="ChEBI" id="CHEBI:17158"/>
        <dbReference type="ChEBI" id="CHEBI:43474"/>
        <dbReference type="ChEBI" id="CHEBI:57642"/>
        <dbReference type="EC" id="4.2.3.3"/>
    </reaction>
</comment>
<comment type="similarity">
    <text evidence="1">Belongs to the methylglyoxal synthase family.</text>
</comment>
<protein>
    <recommendedName>
        <fullName evidence="1">Methylglyoxal synthase</fullName>
        <shortName evidence="1">MGS</shortName>
        <ecNumber evidence="1">4.2.3.3</ecNumber>
    </recommendedName>
</protein>
<dbReference type="EC" id="4.2.3.3" evidence="1"/>
<dbReference type="EMBL" id="CP000546">
    <property type="protein sequence ID" value="ABN03646.1"/>
    <property type="molecule type" value="Genomic_DNA"/>
</dbReference>
<dbReference type="RefSeq" id="WP_004186317.1">
    <property type="nucleotide sequence ID" value="NC_008836.1"/>
</dbReference>
<dbReference type="SMR" id="A2S4A9"/>
<dbReference type="KEGG" id="bml:BMA10229_A0788"/>
<dbReference type="HOGENOM" id="CLU_120420_1_0_4"/>
<dbReference type="Proteomes" id="UP000002283">
    <property type="component" value="Chromosome I"/>
</dbReference>
<dbReference type="GO" id="GO:0005829">
    <property type="term" value="C:cytosol"/>
    <property type="evidence" value="ECO:0007669"/>
    <property type="project" value="TreeGrafter"/>
</dbReference>
<dbReference type="GO" id="GO:0008929">
    <property type="term" value="F:methylglyoxal synthase activity"/>
    <property type="evidence" value="ECO:0007669"/>
    <property type="project" value="UniProtKB-UniRule"/>
</dbReference>
<dbReference type="GO" id="GO:0019242">
    <property type="term" value="P:methylglyoxal biosynthetic process"/>
    <property type="evidence" value="ECO:0007669"/>
    <property type="project" value="UniProtKB-UniRule"/>
</dbReference>
<dbReference type="CDD" id="cd01422">
    <property type="entry name" value="MGS"/>
    <property type="match status" value="1"/>
</dbReference>
<dbReference type="Gene3D" id="3.40.50.1380">
    <property type="entry name" value="Methylglyoxal synthase-like domain"/>
    <property type="match status" value="1"/>
</dbReference>
<dbReference type="HAMAP" id="MF_00549">
    <property type="entry name" value="Methylglyoxal_synth"/>
    <property type="match status" value="1"/>
</dbReference>
<dbReference type="InterPro" id="IPR004363">
    <property type="entry name" value="Methylgl_synth"/>
</dbReference>
<dbReference type="InterPro" id="IPR018148">
    <property type="entry name" value="Methylglyoxal_synth_AS"/>
</dbReference>
<dbReference type="InterPro" id="IPR011607">
    <property type="entry name" value="MGS-like_dom"/>
</dbReference>
<dbReference type="InterPro" id="IPR036914">
    <property type="entry name" value="MGS-like_dom_sf"/>
</dbReference>
<dbReference type="NCBIfam" id="TIGR00160">
    <property type="entry name" value="MGSA"/>
    <property type="match status" value="1"/>
</dbReference>
<dbReference type="NCBIfam" id="NF003559">
    <property type="entry name" value="PRK05234.1"/>
    <property type="match status" value="1"/>
</dbReference>
<dbReference type="PANTHER" id="PTHR30492">
    <property type="entry name" value="METHYLGLYOXAL SYNTHASE"/>
    <property type="match status" value="1"/>
</dbReference>
<dbReference type="PANTHER" id="PTHR30492:SF0">
    <property type="entry name" value="METHYLGLYOXAL SYNTHASE"/>
    <property type="match status" value="1"/>
</dbReference>
<dbReference type="Pfam" id="PF02142">
    <property type="entry name" value="MGS"/>
    <property type="match status" value="1"/>
</dbReference>
<dbReference type="PIRSF" id="PIRSF006614">
    <property type="entry name" value="Methylglyox_syn"/>
    <property type="match status" value="1"/>
</dbReference>
<dbReference type="SMART" id="SM00851">
    <property type="entry name" value="MGS"/>
    <property type="match status" value="1"/>
</dbReference>
<dbReference type="SUPFAM" id="SSF52335">
    <property type="entry name" value="Methylglyoxal synthase-like"/>
    <property type="match status" value="1"/>
</dbReference>
<dbReference type="PROSITE" id="PS01335">
    <property type="entry name" value="METHYLGLYOXAL_SYNTH"/>
    <property type="match status" value="1"/>
</dbReference>
<dbReference type="PROSITE" id="PS51855">
    <property type="entry name" value="MGS"/>
    <property type="match status" value="1"/>
</dbReference>
<gene>
    <name evidence="1" type="primary">mgsA</name>
    <name type="ordered locus">BMA10229_A0788</name>
</gene>
<accession>A2S4A9</accession>
<reference key="1">
    <citation type="journal article" date="2010" name="Genome Biol. Evol.">
        <title>Continuing evolution of Burkholderia mallei through genome reduction and large-scale rearrangements.</title>
        <authorList>
            <person name="Losada L."/>
            <person name="Ronning C.M."/>
            <person name="DeShazer D."/>
            <person name="Woods D."/>
            <person name="Fedorova N."/>
            <person name="Kim H.S."/>
            <person name="Shabalina S.A."/>
            <person name="Pearson T.R."/>
            <person name="Brinkac L."/>
            <person name="Tan P."/>
            <person name="Nandi T."/>
            <person name="Crabtree J."/>
            <person name="Badger J."/>
            <person name="Beckstrom-Sternberg S."/>
            <person name="Saqib M."/>
            <person name="Schutzer S.E."/>
            <person name="Keim P."/>
            <person name="Nierman W.C."/>
        </authorList>
    </citation>
    <scope>NUCLEOTIDE SEQUENCE [LARGE SCALE GENOMIC DNA]</scope>
    <source>
        <strain>NCTC 10229</strain>
    </source>
</reference>
<feature type="chain" id="PRO_1000017793" description="Methylglyoxal synthase">
    <location>
        <begin position="1"/>
        <end position="130"/>
    </location>
</feature>
<feature type="domain" description="MGS-like" evidence="1">
    <location>
        <begin position="1"/>
        <end position="130"/>
    </location>
</feature>
<feature type="active site" description="Proton donor/acceptor" evidence="1">
    <location>
        <position position="63"/>
    </location>
</feature>
<feature type="binding site" evidence="1">
    <location>
        <position position="11"/>
    </location>
    <ligand>
        <name>substrate</name>
    </ligand>
</feature>
<feature type="binding site" evidence="1">
    <location>
        <position position="15"/>
    </location>
    <ligand>
        <name>substrate</name>
    </ligand>
</feature>
<feature type="binding site" evidence="1">
    <location>
        <begin position="37"/>
        <end position="40"/>
    </location>
    <ligand>
        <name>substrate</name>
    </ligand>
</feature>
<feature type="binding site" evidence="1">
    <location>
        <begin position="57"/>
        <end position="58"/>
    </location>
    <ligand>
        <name>substrate</name>
    </ligand>
</feature>
<feature type="binding site" evidence="1">
    <location>
        <position position="90"/>
    </location>
    <ligand>
        <name>substrate</name>
    </ligand>
</feature>
<organism>
    <name type="scientific">Burkholderia mallei (strain NCTC 10229)</name>
    <dbReference type="NCBI Taxonomy" id="412022"/>
    <lineage>
        <taxon>Bacteria</taxon>
        <taxon>Pseudomonadati</taxon>
        <taxon>Pseudomonadota</taxon>
        <taxon>Betaproteobacteria</taxon>
        <taxon>Burkholderiales</taxon>
        <taxon>Burkholderiaceae</taxon>
        <taxon>Burkholderia</taxon>
        <taxon>pseudomallei group</taxon>
    </lineage>
</organism>